<organism>
    <name type="scientific">Rickettsia prowazekii (strain Madrid E)</name>
    <dbReference type="NCBI Taxonomy" id="272947"/>
    <lineage>
        <taxon>Bacteria</taxon>
        <taxon>Pseudomonadati</taxon>
        <taxon>Pseudomonadota</taxon>
        <taxon>Alphaproteobacteria</taxon>
        <taxon>Rickettsiales</taxon>
        <taxon>Rickettsiaceae</taxon>
        <taxon>Rickettsieae</taxon>
        <taxon>Rickettsia</taxon>
        <taxon>typhus group</taxon>
    </lineage>
</organism>
<reference key="1">
    <citation type="journal article" date="1996" name="J. Bacteriol.">
        <title>A chimeric disposition of the elongation factor genes in Rickettsia prowazekii.</title>
        <authorList>
            <person name="Syvaenen A.-C."/>
            <person name="Amiri H."/>
            <person name="Jamal A."/>
            <person name="Andersson S.G.E."/>
            <person name="Kurland C.G."/>
        </authorList>
    </citation>
    <scope>NUCLEOTIDE SEQUENCE [GENOMIC DNA]</scope>
    <source>
        <strain>Madrid E</strain>
    </source>
</reference>
<reference key="2">
    <citation type="journal article" date="1998" name="Nature">
        <title>The genome sequence of Rickettsia prowazekii and the origin of mitochondria.</title>
        <authorList>
            <person name="Andersson S.G.E."/>
            <person name="Zomorodipour A."/>
            <person name="Andersson J.O."/>
            <person name="Sicheritz-Ponten T."/>
            <person name="Alsmark U.C.M."/>
            <person name="Podowski R.M."/>
            <person name="Naeslund A.K."/>
            <person name="Eriksson A.-S."/>
            <person name="Winkler H.H."/>
            <person name="Kurland C.G."/>
        </authorList>
    </citation>
    <scope>NUCLEOTIDE SEQUENCE [LARGE SCALE GENOMIC DNA]</scope>
    <source>
        <strain>Madrid E</strain>
    </source>
</reference>
<dbReference type="EMBL" id="Z54170">
    <property type="protein sequence ID" value="CAA90882.1"/>
    <property type="molecule type" value="Genomic_DNA"/>
</dbReference>
<dbReference type="EMBL" id="AJ235272">
    <property type="protein sequence ID" value="CAA15100.1"/>
    <property type="molecule type" value="Genomic_DNA"/>
</dbReference>
<dbReference type="PIR" id="B71672">
    <property type="entry name" value="B71672"/>
</dbReference>
<dbReference type="RefSeq" id="NP_221024.1">
    <property type="nucleotide sequence ID" value="NC_000963.1"/>
</dbReference>
<dbReference type="RefSeq" id="WP_004596198.1">
    <property type="nucleotide sequence ID" value="NC_000963.1"/>
</dbReference>
<dbReference type="SMR" id="P48850"/>
<dbReference type="STRING" id="272947.gene:17555737"/>
<dbReference type="EnsemblBacteria" id="CAA15100">
    <property type="protein sequence ID" value="CAA15100"/>
    <property type="gene ID" value="CAA15100"/>
</dbReference>
<dbReference type="GeneID" id="57569785"/>
<dbReference type="KEGG" id="rpr:RP660"/>
<dbReference type="PATRIC" id="fig|272947.5.peg.682"/>
<dbReference type="eggNOG" id="COG0051">
    <property type="taxonomic scope" value="Bacteria"/>
</dbReference>
<dbReference type="HOGENOM" id="CLU_122625_1_3_5"/>
<dbReference type="OrthoDB" id="9804464at2"/>
<dbReference type="Proteomes" id="UP000002480">
    <property type="component" value="Chromosome"/>
</dbReference>
<dbReference type="GO" id="GO:1990904">
    <property type="term" value="C:ribonucleoprotein complex"/>
    <property type="evidence" value="ECO:0007669"/>
    <property type="project" value="UniProtKB-KW"/>
</dbReference>
<dbReference type="GO" id="GO:0005840">
    <property type="term" value="C:ribosome"/>
    <property type="evidence" value="ECO:0007669"/>
    <property type="project" value="UniProtKB-KW"/>
</dbReference>
<dbReference type="GO" id="GO:0003735">
    <property type="term" value="F:structural constituent of ribosome"/>
    <property type="evidence" value="ECO:0007669"/>
    <property type="project" value="InterPro"/>
</dbReference>
<dbReference type="GO" id="GO:0000049">
    <property type="term" value="F:tRNA binding"/>
    <property type="evidence" value="ECO:0007669"/>
    <property type="project" value="UniProtKB-UniRule"/>
</dbReference>
<dbReference type="GO" id="GO:0006412">
    <property type="term" value="P:translation"/>
    <property type="evidence" value="ECO:0007669"/>
    <property type="project" value="UniProtKB-UniRule"/>
</dbReference>
<dbReference type="FunFam" id="3.30.70.600:FF:000003">
    <property type="entry name" value="30S ribosomal protein S10"/>
    <property type="match status" value="1"/>
</dbReference>
<dbReference type="Gene3D" id="3.30.70.600">
    <property type="entry name" value="Ribosomal protein S10 domain"/>
    <property type="match status" value="1"/>
</dbReference>
<dbReference type="HAMAP" id="MF_00508">
    <property type="entry name" value="Ribosomal_uS10"/>
    <property type="match status" value="1"/>
</dbReference>
<dbReference type="InterPro" id="IPR001848">
    <property type="entry name" value="Ribosomal_uS10"/>
</dbReference>
<dbReference type="InterPro" id="IPR027486">
    <property type="entry name" value="Ribosomal_uS10_dom"/>
</dbReference>
<dbReference type="InterPro" id="IPR036838">
    <property type="entry name" value="Ribosomal_uS10_dom_sf"/>
</dbReference>
<dbReference type="NCBIfam" id="NF001861">
    <property type="entry name" value="PRK00596.1"/>
    <property type="match status" value="1"/>
</dbReference>
<dbReference type="NCBIfam" id="TIGR01049">
    <property type="entry name" value="rpsJ_bact"/>
    <property type="match status" value="1"/>
</dbReference>
<dbReference type="PANTHER" id="PTHR11700">
    <property type="entry name" value="30S RIBOSOMAL PROTEIN S10 FAMILY MEMBER"/>
    <property type="match status" value="1"/>
</dbReference>
<dbReference type="Pfam" id="PF00338">
    <property type="entry name" value="Ribosomal_S10"/>
    <property type="match status" value="1"/>
</dbReference>
<dbReference type="PRINTS" id="PR00971">
    <property type="entry name" value="RIBOSOMALS10"/>
</dbReference>
<dbReference type="SMART" id="SM01403">
    <property type="entry name" value="Ribosomal_S10"/>
    <property type="match status" value="1"/>
</dbReference>
<dbReference type="SUPFAM" id="SSF54999">
    <property type="entry name" value="Ribosomal protein S10"/>
    <property type="match status" value="1"/>
</dbReference>
<sequence length="105" mass="11932">MKNKIKIRLKSFDHRSLDQATKEIVSAVKRTFATINGPIPLPRKIERFTVNRSPHVHKKSREQFEIRKHKRLLVIDDPNPAVVDALSKVDLAAGVDVVIELESGE</sequence>
<accession>P48850</accession>
<feature type="chain" id="PRO_0000146587" description="Small ribosomal subunit protein uS10">
    <location>
        <begin position="1"/>
        <end position="105"/>
    </location>
</feature>
<evidence type="ECO:0000255" key="1">
    <source>
        <dbReference type="HAMAP-Rule" id="MF_00508"/>
    </source>
</evidence>
<evidence type="ECO:0000305" key="2"/>
<gene>
    <name evidence="1" type="primary">rpsJ</name>
    <name type="ordered locus">RP660</name>
</gene>
<comment type="function">
    <text evidence="1">Involved in the binding of tRNA to the ribosomes.</text>
</comment>
<comment type="subunit">
    <text evidence="1">Part of the 30S ribosomal subunit.</text>
</comment>
<comment type="similarity">
    <text evidence="1">Belongs to the universal ribosomal protein uS10 family.</text>
</comment>
<name>RS10_RICPR</name>
<proteinExistence type="inferred from homology"/>
<keyword id="KW-1185">Reference proteome</keyword>
<keyword id="KW-0687">Ribonucleoprotein</keyword>
<keyword id="KW-0689">Ribosomal protein</keyword>
<protein>
    <recommendedName>
        <fullName evidence="1">Small ribosomal subunit protein uS10</fullName>
    </recommendedName>
    <alternativeName>
        <fullName evidence="2">30S ribosomal protein S10</fullName>
    </alternativeName>
</protein>